<reference key="1">
    <citation type="journal article" date="2007" name="Proc. Natl. Acad. Sci. U.S.A.">
        <title>Deep-sea vent epsilon-proteobacterial genomes provide insights into emergence of pathogens.</title>
        <authorList>
            <person name="Nakagawa S."/>
            <person name="Takaki Y."/>
            <person name="Shimamura S."/>
            <person name="Reysenbach A.-L."/>
            <person name="Takai K."/>
            <person name="Horikoshi K."/>
        </authorList>
    </citation>
    <scope>NUCLEOTIDE SEQUENCE [LARGE SCALE GENOMIC DNA]</scope>
    <source>
        <strain>SB155-2</strain>
    </source>
</reference>
<organism>
    <name type="scientific">Nitratiruptor sp. (strain SB155-2)</name>
    <dbReference type="NCBI Taxonomy" id="387092"/>
    <lineage>
        <taxon>Bacteria</taxon>
        <taxon>Pseudomonadati</taxon>
        <taxon>Campylobacterota</taxon>
        <taxon>Epsilonproteobacteria</taxon>
        <taxon>Nautiliales</taxon>
        <taxon>Nitratiruptoraceae</taxon>
        <taxon>Nitratiruptor</taxon>
    </lineage>
</organism>
<dbReference type="EMBL" id="AP009178">
    <property type="protein sequence ID" value="BAF69386.1"/>
    <property type="molecule type" value="Genomic_DNA"/>
</dbReference>
<dbReference type="RefSeq" id="WP_012081649.1">
    <property type="nucleotide sequence ID" value="NC_009662.1"/>
</dbReference>
<dbReference type="SMR" id="A6Q1M7"/>
<dbReference type="FunCoup" id="A6Q1M7">
    <property type="interactions" value="483"/>
</dbReference>
<dbReference type="STRING" id="387092.NIS_0272"/>
<dbReference type="KEGG" id="nis:NIS_0272"/>
<dbReference type="eggNOG" id="COG0480">
    <property type="taxonomic scope" value="Bacteria"/>
</dbReference>
<dbReference type="HOGENOM" id="CLU_002794_4_1_7"/>
<dbReference type="InParanoid" id="A6Q1M7"/>
<dbReference type="OrthoDB" id="9804431at2"/>
<dbReference type="Proteomes" id="UP000001118">
    <property type="component" value="Chromosome"/>
</dbReference>
<dbReference type="GO" id="GO:0005737">
    <property type="term" value="C:cytoplasm"/>
    <property type="evidence" value="ECO:0007669"/>
    <property type="project" value="UniProtKB-SubCell"/>
</dbReference>
<dbReference type="GO" id="GO:0005525">
    <property type="term" value="F:GTP binding"/>
    <property type="evidence" value="ECO:0007669"/>
    <property type="project" value="UniProtKB-UniRule"/>
</dbReference>
<dbReference type="GO" id="GO:0003924">
    <property type="term" value="F:GTPase activity"/>
    <property type="evidence" value="ECO:0007669"/>
    <property type="project" value="InterPro"/>
</dbReference>
<dbReference type="GO" id="GO:0003746">
    <property type="term" value="F:translation elongation factor activity"/>
    <property type="evidence" value="ECO:0007669"/>
    <property type="project" value="UniProtKB-UniRule"/>
</dbReference>
<dbReference type="GO" id="GO:0032790">
    <property type="term" value="P:ribosome disassembly"/>
    <property type="evidence" value="ECO:0007669"/>
    <property type="project" value="TreeGrafter"/>
</dbReference>
<dbReference type="CDD" id="cd01886">
    <property type="entry name" value="EF-G"/>
    <property type="match status" value="1"/>
</dbReference>
<dbReference type="CDD" id="cd16262">
    <property type="entry name" value="EFG_III"/>
    <property type="match status" value="1"/>
</dbReference>
<dbReference type="CDD" id="cd01434">
    <property type="entry name" value="EFG_mtEFG1_IV"/>
    <property type="match status" value="1"/>
</dbReference>
<dbReference type="CDD" id="cd03713">
    <property type="entry name" value="EFG_mtEFG_C"/>
    <property type="match status" value="1"/>
</dbReference>
<dbReference type="CDD" id="cd04088">
    <property type="entry name" value="EFG_mtEFG_II"/>
    <property type="match status" value="1"/>
</dbReference>
<dbReference type="FunFam" id="2.40.30.10:FF:000006">
    <property type="entry name" value="Elongation factor G"/>
    <property type="match status" value="1"/>
</dbReference>
<dbReference type="FunFam" id="3.30.230.10:FF:000003">
    <property type="entry name" value="Elongation factor G"/>
    <property type="match status" value="1"/>
</dbReference>
<dbReference type="FunFam" id="3.30.70.240:FF:000001">
    <property type="entry name" value="Elongation factor G"/>
    <property type="match status" value="1"/>
</dbReference>
<dbReference type="FunFam" id="3.30.70.870:FF:000001">
    <property type="entry name" value="Elongation factor G"/>
    <property type="match status" value="1"/>
</dbReference>
<dbReference type="FunFam" id="3.40.50.300:FF:000029">
    <property type="entry name" value="Elongation factor G"/>
    <property type="match status" value="1"/>
</dbReference>
<dbReference type="Gene3D" id="3.30.230.10">
    <property type="match status" value="1"/>
</dbReference>
<dbReference type="Gene3D" id="3.30.70.240">
    <property type="match status" value="1"/>
</dbReference>
<dbReference type="Gene3D" id="3.30.70.870">
    <property type="entry name" value="Elongation Factor G (Translational Gtpase), domain 3"/>
    <property type="match status" value="1"/>
</dbReference>
<dbReference type="Gene3D" id="3.40.50.300">
    <property type="entry name" value="P-loop containing nucleotide triphosphate hydrolases"/>
    <property type="match status" value="1"/>
</dbReference>
<dbReference type="Gene3D" id="2.40.30.10">
    <property type="entry name" value="Translation factors"/>
    <property type="match status" value="1"/>
</dbReference>
<dbReference type="HAMAP" id="MF_00054_B">
    <property type="entry name" value="EF_G_EF_2_B"/>
    <property type="match status" value="1"/>
</dbReference>
<dbReference type="InterPro" id="IPR053905">
    <property type="entry name" value="EF-G-like_DII"/>
</dbReference>
<dbReference type="InterPro" id="IPR041095">
    <property type="entry name" value="EFG_II"/>
</dbReference>
<dbReference type="InterPro" id="IPR009022">
    <property type="entry name" value="EFG_III"/>
</dbReference>
<dbReference type="InterPro" id="IPR035647">
    <property type="entry name" value="EFG_III/V"/>
</dbReference>
<dbReference type="InterPro" id="IPR047872">
    <property type="entry name" value="EFG_IV"/>
</dbReference>
<dbReference type="InterPro" id="IPR035649">
    <property type="entry name" value="EFG_V"/>
</dbReference>
<dbReference type="InterPro" id="IPR000640">
    <property type="entry name" value="EFG_V-like"/>
</dbReference>
<dbReference type="InterPro" id="IPR031157">
    <property type="entry name" value="G_TR_CS"/>
</dbReference>
<dbReference type="InterPro" id="IPR027417">
    <property type="entry name" value="P-loop_NTPase"/>
</dbReference>
<dbReference type="InterPro" id="IPR020568">
    <property type="entry name" value="Ribosomal_Su5_D2-typ_SF"/>
</dbReference>
<dbReference type="InterPro" id="IPR014721">
    <property type="entry name" value="Ribsml_uS5_D2-typ_fold_subgr"/>
</dbReference>
<dbReference type="InterPro" id="IPR005225">
    <property type="entry name" value="Small_GTP-bd"/>
</dbReference>
<dbReference type="InterPro" id="IPR000795">
    <property type="entry name" value="T_Tr_GTP-bd_dom"/>
</dbReference>
<dbReference type="InterPro" id="IPR009000">
    <property type="entry name" value="Transl_B-barrel_sf"/>
</dbReference>
<dbReference type="InterPro" id="IPR004540">
    <property type="entry name" value="Transl_elong_EFG/EF2"/>
</dbReference>
<dbReference type="InterPro" id="IPR005517">
    <property type="entry name" value="Transl_elong_EFG/EF2_IV"/>
</dbReference>
<dbReference type="NCBIfam" id="TIGR00484">
    <property type="entry name" value="EF-G"/>
    <property type="match status" value="1"/>
</dbReference>
<dbReference type="NCBIfam" id="NF009379">
    <property type="entry name" value="PRK12740.1-3"/>
    <property type="match status" value="1"/>
</dbReference>
<dbReference type="NCBIfam" id="NF009381">
    <property type="entry name" value="PRK12740.1-5"/>
    <property type="match status" value="1"/>
</dbReference>
<dbReference type="NCBIfam" id="NF009891">
    <property type="entry name" value="PRK13351.1-1"/>
    <property type="match status" value="1"/>
</dbReference>
<dbReference type="NCBIfam" id="TIGR00231">
    <property type="entry name" value="small_GTP"/>
    <property type="match status" value="1"/>
</dbReference>
<dbReference type="PANTHER" id="PTHR43261:SF1">
    <property type="entry name" value="RIBOSOME-RELEASING FACTOR 2, MITOCHONDRIAL"/>
    <property type="match status" value="1"/>
</dbReference>
<dbReference type="PANTHER" id="PTHR43261">
    <property type="entry name" value="TRANSLATION ELONGATION FACTOR G-RELATED"/>
    <property type="match status" value="1"/>
</dbReference>
<dbReference type="Pfam" id="PF22042">
    <property type="entry name" value="EF-G_D2"/>
    <property type="match status" value="1"/>
</dbReference>
<dbReference type="Pfam" id="PF00679">
    <property type="entry name" value="EFG_C"/>
    <property type="match status" value="1"/>
</dbReference>
<dbReference type="Pfam" id="PF14492">
    <property type="entry name" value="EFG_III"/>
    <property type="match status" value="1"/>
</dbReference>
<dbReference type="Pfam" id="PF03764">
    <property type="entry name" value="EFG_IV"/>
    <property type="match status" value="1"/>
</dbReference>
<dbReference type="Pfam" id="PF00009">
    <property type="entry name" value="GTP_EFTU"/>
    <property type="match status" value="1"/>
</dbReference>
<dbReference type="PRINTS" id="PR00315">
    <property type="entry name" value="ELONGATNFCT"/>
</dbReference>
<dbReference type="SMART" id="SM00838">
    <property type="entry name" value="EFG_C"/>
    <property type="match status" value="1"/>
</dbReference>
<dbReference type="SMART" id="SM00889">
    <property type="entry name" value="EFG_IV"/>
    <property type="match status" value="1"/>
</dbReference>
<dbReference type="SUPFAM" id="SSF54980">
    <property type="entry name" value="EF-G C-terminal domain-like"/>
    <property type="match status" value="2"/>
</dbReference>
<dbReference type="SUPFAM" id="SSF52540">
    <property type="entry name" value="P-loop containing nucleoside triphosphate hydrolases"/>
    <property type="match status" value="1"/>
</dbReference>
<dbReference type="SUPFAM" id="SSF54211">
    <property type="entry name" value="Ribosomal protein S5 domain 2-like"/>
    <property type="match status" value="1"/>
</dbReference>
<dbReference type="SUPFAM" id="SSF50447">
    <property type="entry name" value="Translation proteins"/>
    <property type="match status" value="1"/>
</dbReference>
<dbReference type="PROSITE" id="PS00301">
    <property type="entry name" value="G_TR_1"/>
    <property type="match status" value="1"/>
</dbReference>
<dbReference type="PROSITE" id="PS51722">
    <property type="entry name" value="G_TR_2"/>
    <property type="match status" value="1"/>
</dbReference>
<comment type="function">
    <text evidence="1">Catalyzes the GTP-dependent ribosomal translocation step during translation elongation. During this step, the ribosome changes from the pre-translocational (PRE) to the post-translocational (POST) state as the newly formed A-site-bound peptidyl-tRNA and P-site-bound deacylated tRNA move to the P and E sites, respectively. Catalyzes the coordinated movement of the two tRNA molecules, the mRNA and conformational changes in the ribosome.</text>
</comment>
<comment type="subcellular location">
    <subcellularLocation>
        <location evidence="1">Cytoplasm</location>
    </subcellularLocation>
</comment>
<comment type="similarity">
    <text evidence="1">Belongs to the TRAFAC class translation factor GTPase superfamily. Classic translation factor GTPase family. EF-G/EF-2 subfamily.</text>
</comment>
<proteinExistence type="inferred from homology"/>
<sequence>MARKTPIEKVRNIGIAAHIDAGKTTTTERILYYTGISHKIGEVHEGAATMDWMDQEKERGITITSAATTCFWKDHQINIIDTPGHVDFTIEVERSMRVLDGAVAVFCAVGGVQPQSETVWRQANKYHVPRIVFVNKMDRIGADFYNVENQIRERLKANPVPIQIPIGAEDNFRGVVDLVEMKGIVWDDETMGAKYEVIDIPEELREKAEEYREKLVEAVAETDEELLDKYLGGEELTTEEIKKGIKKGTLDMTITPMLCGSAFKNKGVQTLLDAVVDYLPAPTEVSWIKGIDPKTGEEVSVESTDNGPFAALAFKIMTDPFVGQLSFIRVYRGQIASGSYVLNSTKEKKERVGRLLKMHANKREEIKELPAGEIGAVVGLKYTLTGDTLCDESHPVILEKMEFPEPVISVAVEPKTKADQEKMATALAKLAEEDPSFRVHTDEETGQTIISGMGELHLEIIVDRMKREFKVDAEVGQPQVAYRETIKAPVDQEYKYAKQSGGRGQYGHVFIKLEPQEPGKGYEFVNNITGGVIPKEYIPAVDKGIQEAMQNGVLAGYPVVDIKATLYDGSYHDVDSSEMAFKIAGSMAFKEAAKKANPILLEPIMKVEVEVPEEYMGDVIGDINRRRGQVQSMEDRAGNKIVTAMVPLAEMFGYSTDLRSFTQGRGTYSMEFDHYEEVPKNVADEIIKKRNG</sequence>
<accession>A6Q1M7</accession>
<name>EFG_NITSB</name>
<protein>
    <recommendedName>
        <fullName evidence="1">Elongation factor G</fullName>
        <shortName evidence="1">EF-G</shortName>
    </recommendedName>
</protein>
<keyword id="KW-0963">Cytoplasm</keyword>
<keyword id="KW-0251">Elongation factor</keyword>
<keyword id="KW-0342">GTP-binding</keyword>
<keyword id="KW-0547">Nucleotide-binding</keyword>
<keyword id="KW-0648">Protein biosynthesis</keyword>
<keyword id="KW-1185">Reference proteome</keyword>
<gene>
    <name evidence="1" type="primary">fusA</name>
    <name type="ordered locus">NIS_0272</name>
</gene>
<feature type="chain" id="PRO_1000008860" description="Elongation factor G">
    <location>
        <begin position="1"/>
        <end position="692"/>
    </location>
</feature>
<feature type="domain" description="tr-type G">
    <location>
        <begin position="8"/>
        <end position="283"/>
    </location>
</feature>
<feature type="binding site" evidence="1">
    <location>
        <begin position="17"/>
        <end position="24"/>
    </location>
    <ligand>
        <name>GTP</name>
        <dbReference type="ChEBI" id="CHEBI:37565"/>
    </ligand>
</feature>
<feature type="binding site" evidence="1">
    <location>
        <begin position="81"/>
        <end position="85"/>
    </location>
    <ligand>
        <name>GTP</name>
        <dbReference type="ChEBI" id="CHEBI:37565"/>
    </ligand>
</feature>
<feature type="binding site" evidence="1">
    <location>
        <begin position="135"/>
        <end position="138"/>
    </location>
    <ligand>
        <name>GTP</name>
        <dbReference type="ChEBI" id="CHEBI:37565"/>
    </ligand>
</feature>
<evidence type="ECO:0000255" key="1">
    <source>
        <dbReference type="HAMAP-Rule" id="MF_00054"/>
    </source>
</evidence>